<keyword id="KW-0963">Cytoplasm</keyword>
<keyword id="KW-0489">Methyltransferase</keyword>
<keyword id="KW-0698">rRNA processing</keyword>
<keyword id="KW-0949">S-adenosyl-L-methionine</keyword>
<keyword id="KW-0808">Transferase</keyword>
<proteinExistence type="inferred from homology"/>
<feature type="chain" id="PRO_0000155529" description="Ribosomal RNA large subunit methyltransferase E">
    <location>
        <begin position="1"/>
        <end position="265"/>
    </location>
</feature>
<feature type="region of interest" description="Disordered" evidence="2">
    <location>
        <begin position="230"/>
        <end position="265"/>
    </location>
</feature>
<feature type="compositionally biased region" description="Basic and acidic residues" evidence="2">
    <location>
        <begin position="243"/>
        <end position="257"/>
    </location>
</feature>
<feature type="active site" description="Proton acceptor" evidence="1">
    <location>
        <position position="186"/>
    </location>
</feature>
<feature type="binding site" evidence="1">
    <location>
        <position position="83"/>
    </location>
    <ligand>
        <name>S-adenosyl-L-methionine</name>
        <dbReference type="ChEBI" id="CHEBI:59789"/>
    </ligand>
</feature>
<feature type="binding site" evidence="1">
    <location>
        <position position="85"/>
    </location>
    <ligand>
        <name>S-adenosyl-L-methionine</name>
        <dbReference type="ChEBI" id="CHEBI:59789"/>
    </ligand>
</feature>
<feature type="binding site" evidence="1">
    <location>
        <position position="106"/>
    </location>
    <ligand>
        <name>S-adenosyl-L-methionine</name>
        <dbReference type="ChEBI" id="CHEBI:59789"/>
    </ligand>
</feature>
<feature type="binding site" evidence="1">
    <location>
        <position position="122"/>
    </location>
    <ligand>
        <name>S-adenosyl-L-methionine</name>
        <dbReference type="ChEBI" id="CHEBI:59789"/>
    </ligand>
</feature>
<feature type="binding site" evidence="1">
    <location>
        <position position="146"/>
    </location>
    <ligand>
        <name>S-adenosyl-L-methionine</name>
        <dbReference type="ChEBI" id="CHEBI:59789"/>
    </ligand>
</feature>
<protein>
    <recommendedName>
        <fullName evidence="1">Ribosomal RNA large subunit methyltransferase E</fullName>
        <ecNumber evidence="1">2.1.1.166</ecNumber>
    </recommendedName>
    <alternativeName>
        <fullName evidence="1">23S rRNA Um2552 methyltransferase</fullName>
    </alternativeName>
    <alternativeName>
        <fullName evidence="1">rRNA (uridine-2'-O-)-methyltransferase</fullName>
    </alternativeName>
</protein>
<reference key="1">
    <citation type="journal article" date="2000" name="DNA Res.">
        <title>Complete genome structure of the nitrogen-fixing symbiotic bacterium Mesorhizobium loti.</title>
        <authorList>
            <person name="Kaneko T."/>
            <person name="Nakamura Y."/>
            <person name="Sato S."/>
            <person name="Asamizu E."/>
            <person name="Kato T."/>
            <person name="Sasamoto S."/>
            <person name="Watanabe A."/>
            <person name="Idesawa K."/>
            <person name="Ishikawa A."/>
            <person name="Kawashima K."/>
            <person name="Kimura T."/>
            <person name="Kishida Y."/>
            <person name="Kiyokawa C."/>
            <person name="Kohara M."/>
            <person name="Matsumoto M."/>
            <person name="Matsuno A."/>
            <person name="Mochizuki Y."/>
            <person name="Nakayama S."/>
            <person name="Nakazaki N."/>
            <person name="Shimpo S."/>
            <person name="Sugimoto M."/>
            <person name="Takeuchi C."/>
            <person name="Yamada M."/>
            <person name="Tabata S."/>
        </authorList>
    </citation>
    <scope>NUCLEOTIDE SEQUENCE [LARGE SCALE GENOMIC DNA]</scope>
    <source>
        <strain>LMG 29417 / CECT 9101 / MAFF 303099</strain>
    </source>
</reference>
<comment type="function">
    <text evidence="1">Specifically methylates the uridine in position 2552 of 23S rRNA at the 2'-O position of the ribose in the fully assembled 50S ribosomal subunit.</text>
</comment>
<comment type="catalytic activity">
    <reaction evidence="1">
        <text>uridine(2552) in 23S rRNA + S-adenosyl-L-methionine = 2'-O-methyluridine(2552) in 23S rRNA + S-adenosyl-L-homocysteine + H(+)</text>
        <dbReference type="Rhea" id="RHEA:42720"/>
        <dbReference type="Rhea" id="RHEA-COMP:10202"/>
        <dbReference type="Rhea" id="RHEA-COMP:10203"/>
        <dbReference type="ChEBI" id="CHEBI:15378"/>
        <dbReference type="ChEBI" id="CHEBI:57856"/>
        <dbReference type="ChEBI" id="CHEBI:59789"/>
        <dbReference type="ChEBI" id="CHEBI:65315"/>
        <dbReference type="ChEBI" id="CHEBI:74478"/>
        <dbReference type="EC" id="2.1.1.166"/>
    </reaction>
</comment>
<comment type="subcellular location">
    <subcellularLocation>
        <location evidence="1">Cytoplasm</location>
    </subcellularLocation>
</comment>
<comment type="similarity">
    <text evidence="1">Belongs to the class I-like SAM-binding methyltransferase superfamily. RNA methyltransferase RlmE family.</text>
</comment>
<gene>
    <name evidence="1" type="primary">rlmE</name>
    <name evidence="1" type="synonym">ftsJ</name>
    <name evidence="1" type="synonym">rrmJ</name>
    <name type="ordered locus">mlr8347</name>
</gene>
<dbReference type="EC" id="2.1.1.166" evidence="1"/>
<dbReference type="EMBL" id="BA000012">
    <property type="protein sequence ID" value="BAB53923.1"/>
    <property type="molecule type" value="Genomic_DNA"/>
</dbReference>
<dbReference type="RefSeq" id="WP_010915549.1">
    <property type="nucleotide sequence ID" value="NC_002678.2"/>
</dbReference>
<dbReference type="SMR" id="Q983F8"/>
<dbReference type="KEGG" id="mlo:mlr8347"/>
<dbReference type="eggNOG" id="COG0293">
    <property type="taxonomic scope" value="Bacteria"/>
</dbReference>
<dbReference type="HOGENOM" id="CLU_009422_4_0_5"/>
<dbReference type="Proteomes" id="UP000000552">
    <property type="component" value="Chromosome"/>
</dbReference>
<dbReference type="GO" id="GO:0005737">
    <property type="term" value="C:cytoplasm"/>
    <property type="evidence" value="ECO:0007669"/>
    <property type="project" value="UniProtKB-SubCell"/>
</dbReference>
<dbReference type="GO" id="GO:0008650">
    <property type="term" value="F:rRNA (uridine-2'-O-)-methyltransferase activity"/>
    <property type="evidence" value="ECO:0007669"/>
    <property type="project" value="UniProtKB-UniRule"/>
</dbReference>
<dbReference type="Gene3D" id="3.40.50.150">
    <property type="entry name" value="Vaccinia Virus protein VP39"/>
    <property type="match status" value="1"/>
</dbReference>
<dbReference type="HAMAP" id="MF_01547">
    <property type="entry name" value="RNA_methyltr_E"/>
    <property type="match status" value="1"/>
</dbReference>
<dbReference type="InterPro" id="IPR050082">
    <property type="entry name" value="RNA_methyltr_RlmE"/>
</dbReference>
<dbReference type="InterPro" id="IPR002877">
    <property type="entry name" value="RNA_MeTrfase_FtsJ_dom"/>
</dbReference>
<dbReference type="InterPro" id="IPR015507">
    <property type="entry name" value="rRNA-MeTfrase_E"/>
</dbReference>
<dbReference type="InterPro" id="IPR029063">
    <property type="entry name" value="SAM-dependent_MTases_sf"/>
</dbReference>
<dbReference type="PANTHER" id="PTHR10920">
    <property type="entry name" value="RIBOSOMAL RNA METHYLTRANSFERASE"/>
    <property type="match status" value="1"/>
</dbReference>
<dbReference type="PANTHER" id="PTHR10920:SF18">
    <property type="entry name" value="RRNA METHYLTRANSFERASE 2, MITOCHONDRIAL"/>
    <property type="match status" value="1"/>
</dbReference>
<dbReference type="Pfam" id="PF01728">
    <property type="entry name" value="FtsJ"/>
    <property type="match status" value="1"/>
</dbReference>
<dbReference type="SUPFAM" id="SSF53335">
    <property type="entry name" value="S-adenosyl-L-methionine-dependent methyltransferases"/>
    <property type="match status" value="1"/>
</dbReference>
<name>RLME_RHILO</name>
<sequence length="265" mass="28714">MTKKPENPGSAGIRVLKTRIKKKSGLKESSRRWLQRHINDPYVQRSKADGYRSRAAYKLIEIDDKHHLLKPGMKVIDLGAAPGGWCQVAAARTKSTAENPHVVGIDYLEMDAVPGAPVLLMDFLDPDAPQKLAEALGGNPDVVLSDMAAPTTGHKRTDHIRTMHLCEVAADFALSVLKPGGHFLAKTFQGGAENELLSMLKKNFRSVHHVKPPASRDESVELYLLAKDFKGREAGPPSGGSERPVDVSKDLSARSDSEGPGDAEG</sequence>
<evidence type="ECO:0000255" key="1">
    <source>
        <dbReference type="HAMAP-Rule" id="MF_01547"/>
    </source>
</evidence>
<evidence type="ECO:0000256" key="2">
    <source>
        <dbReference type="SAM" id="MobiDB-lite"/>
    </source>
</evidence>
<accession>Q983F8</accession>
<organism>
    <name type="scientific">Mesorhizobium japonicum (strain LMG 29417 / CECT 9101 / MAFF 303099)</name>
    <name type="common">Mesorhizobium loti (strain MAFF 303099)</name>
    <dbReference type="NCBI Taxonomy" id="266835"/>
    <lineage>
        <taxon>Bacteria</taxon>
        <taxon>Pseudomonadati</taxon>
        <taxon>Pseudomonadota</taxon>
        <taxon>Alphaproteobacteria</taxon>
        <taxon>Hyphomicrobiales</taxon>
        <taxon>Phyllobacteriaceae</taxon>
        <taxon>Mesorhizobium</taxon>
    </lineage>
</organism>